<proteinExistence type="inferred from homology"/>
<reference key="1">
    <citation type="journal article" date="2005" name="Science">
        <title>Life at depth: Photobacterium profundum genome sequence and expression analysis.</title>
        <authorList>
            <person name="Vezzi A."/>
            <person name="Campanaro S."/>
            <person name="D'Angelo M."/>
            <person name="Simonato F."/>
            <person name="Vitulo N."/>
            <person name="Lauro F.M."/>
            <person name="Cestaro A."/>
            <person name="Malacrida G."/>
            <person name="Simionati B."/>
            <person name="Cannata N."/>
            <person name="Romualdi C."/>
            <person name="Bartlett D.H."/>
            <person name="Valle G."/>
        </authorList>
    </citation>
    <scope>NUCLEOTIDE SEQUENCE [LARGE SCALE GENOMIC DNA]</scope>
    <source>
        <strain>ATCC BAA-1253 / SS9</strain>
    </source>
</reference>
<protein>
    <recommendedName>
        <fullName evidence="1">UPF0597 protein PBPRB0240</fullName>
    </recommendedName>
</protein>
<evidence type="ECO:0000255" key="1">
    <source>
        <dbReference type="HAMAP-Rule" id="MF_01845"/>
    </source>
</evidence>
<evidence type="ECO:0000305" key="2"/>
<accession>Q6LKM4</accession>
<organism>
    <name type="scientific">Photobacterium profundum (strain SS9)</name>
    <dbReference type="NCBI Taxonomy" id="298386"/>
    <lineage>
        <taxon>Bacteria</taxon>
        <taxon>Pseudomonadati</taxon>
        <taxon>Pseudomonadota</taxon>
        <taxon>Gammaproteobacteria</taxon>
        <taxon>Vibrionales</taxon>
        <taxon>Vibrionaceae</taxon>
        <taxon>Photobacterium</taxon>
    </lineage>
</organism>
<feature type="chain" id="PRO_0000339835" description="UPF0597 protein PBPRB0240">
    <location>
        <begin position="1"/>
        <end position="428"/>
    </location>
</feature>
<keyword id="KW-1185">Reference proteome</keyword>
<name>Y4240_PHOPR</name>
<sequence length="428" mass="44170">MKTNLWNGFIDVVKREVVPALGCTEPVSVALAAAIAVEKLNGTVEKITALVSPNLMKNGMGVGVPGTGMVGLPIAAAVGAIAGEANAQLEVLKNITPEDVAHAKILIDAGNVHVGVADVNNILYAKVTVTSGDEFVAVTIADSHTHVMAIEENGITTYIAEPANTATSVKKTSPFEGALLEDIYDFALNAPLEEICFIEHAAELNDALSEEGLTGKYGLQIGATFQRNVDRGLLSGGLLTDVLRRTAAASDARMDGAMKPAMSNSGSGNQGIAATMPVVVVADFLKVDKEKTIRALMLSHLTAIYIKSHQNKLSALCGATTASMGAVAGMTWLLGGDLNKINNAICSMIGDIAGIICDGAKTSCAMKVSSSAGSAVKSALMALDGIYVTGNEGIVADNADASIRNLSALANGSMTQTDVQILDIMVNK</sequence>
<dbReference type="EMBL" id="CR378675">
    <property type="protein sequence ID" value="CAG22113.1"/>
    <property type="status" value="ALT_INIT"/>
    <property type="molecule type" value="Genomic_DNA"/>
</dbReference>
<dbReference type="RefSeq" id="WP_041394889.1">
    <property type="nucleotide sequence ID" value="NC_006371.1"/>
</dbReference>
<dbReference type="STRING" id="298386.PBPRB0240"/>
<dbReference type="KEGG" id="ppr:PBPRB0240"/>
<dbReference type="eggNOG" id="COG3681">
    <property type="taxonomic scope" value="Bacteria"/>
</dbReference>
<dbReference type="HOGENOM" id="CLU_051840_0_0_6"/>
<dbReference type="Proteomes" id="UP000000593">
    <property type="component" value="Chromosome 2"/>
</dbReference>
<dbReference type="GO" id="GO:0080146">
    <property type="term" value="F:L-cysteine desulfhydrase activity"/>
    <property type="evidence" value="ECO:0007669"/>
    <property type="project" value="TreeGrafter"/>
</dbReference>
<dbReference type="GO" id="GO:0019450">
    <property type="term" value="P:L-cysteine catabolic process to pyruvate"/>
    <property type="evidence" value="ECO:0007669"/>
    <property type="project" value="TreeGrafter"/>
</dbReference>
<dbReference type="HAMAP" id="MF_01845">
    <property type="entry name" value="UPF0597"/>
    <property type="match status" value="1"/>
</dbReference>
<dbReference type="InterPro" id="IPR005130">
    <property type="entry name" value="Ser_deHydtase-like_asu"/>
</dbReference>
<dbReference type="InterPro" id="IPR021144">
    <property type="entry name" value="UPF0597"/>
</dbReference>
<dbReference type="PANTHER" id="PTHR30501">
    <property type="entry name" value="UPF0597 PROTEIN YHAM"/>
    <property type="match status" value="1"/>
</dbReference>
<dbReference type="PANTHER" id="PTHR30501:SF2">
    <property type="entry name" value="UPF0597 PROTEIN YHAM"/>
    <property type="match status" value="1"/>
</dbReference>
<dbReference type="Pfam" id="PF03313">
    <property type="entry name" value="SDH_alpha"/>
    <property type="match status" value="1"/>
</dbReference>
<dbReference type="PIRSF" id="PIRSF006054">
    <property type="entry name" value="UCP006054"/>
    <property type="match status" value="1"/>
</dbReference>
<comment type="similarity">
    <text evidence="1">Belongs to the UPF0597 family.</text>
</comment>
<comment type="sequence caution" evidence="2">
    <conflict type="erroneous initiation">
        <sequence resource="EMBL-CDS" id="CAG22113"/>
    </conflict>
</comment>
<gene>
    <name type="ordered locus">PBPRB0240</name>
</gene>